<dbReference type="EMBL" id="CP000509">
    <property type="protein sequence ID" value="ABL83385.1"/>
    <property type="molecule type" value="Genomic_DNA"/>
</dbReference>
<dbReference type="RefSeq" id="WP_011757316.1">
    <property type="nucleotide sequence ID" value="NC_008699.1"/>
</dbReference>
<dbReference type="SMR" id="A1SNK0"/>
<dbReference type="STRING" id="196162.Noca_3887"/>
<dbReference type="KEGG" id="nca:Noca_3887"/>
<dbReference type="eggNOG" id="COG1841">
    <property type="taxonomic scope" value="Bacteria"/>
</dbReference>
<dbReference type="HOGENOM" id="CLU_131047_2_0_11"/>
<dbReference type="OrthoDB" id="9812790at2"/>
<dbReference type="Proteomes" id="UP000000640">
    <property type="component" value="Chromosome"/>
</dbReference>
<dbReference type="GO" id="GO:0022625">
    <property type="term" value="C:cytosolic large ribosomal subunit"/>
    <property type="evidence" value="ECO:0007669"/>
    <property type="project" value="TreeGrafter"/>
</dbReference>
<dbReference type="GO" id="GO:0003735">
    <property type="term" value="F:structural constituent of ribosome"/>
    <property type="evidence" value="ECO:0007669"/>
    <property type="project" value="InterPro"/>
</dbReference>
<dbReference type="GO" id="GO:0006412">
    <property type="term" value="P:translation"/>
    <property type="evidence" value="ECO:0007669"/>
    <property type="project" value="UniProtKB-UniRule"/>
</dbReference>
<dbReference type="CDD" id="cd01658">
    <property type="entry name" value="Ribosomal_L30"/>
    <property type="match status" value="1"/>
</dbReference>
<dbReference type="FunFam" id="3.30.1390.20:FF:000001">
    <property type="entry name" value="50S ribosomal protein L30"/>
    <property type="match status" value="1"/>
</dbReference>
<dbReference type="Gene3D" id="3.30.1390.20">
    <property type="entry name" value="Ribosomal protein L30, ferredoxin-like fold domain"/>
    <property type="match status" value="1"/>
</dbReference>
<dbReference type="HAMAP" id="MF_01371_B">
    <property type="entry name" value="Ribosomal_uL30_B"/>
    <property type="match status" value="1"/>
</dbReference>
<dbReference type="InterPro" id="IPR036919">
    <property type="entry name" value="Ribo_uL30_ferredoxin-like_sf"/>
</dbReference>
<dbReference type="InterPro" id="IPR005996">
    <property type="entry name" value="Ribosomal_uL30_bac-type"/>
</dbReference>
<dbReference type="InterPro" id="IPR016082">
    <property type="entry name" value="Ribosomal_uL30_ferredoxin-like"/>
</dbReference>
<dbReference type="NCBIfam" id="TIGR01308">
    <property type="entry name" value="rpmD_bact"/>
    <property type="match status" value="1"/>
</dbReference>
<dbReference type="PANTHER" id="PTHR15892:SF2">
    <property type="entry name" value="LARGE RIBOSOMAL SUBUNIT PROTEIN UL30M"/>
    <property type="match status" value="1"/>
</dbReference>
<dbReference type="PANTHER" id="PTHR15892">
    <property type="entry name" value="MITOCHONDRIAL RIBOSOMAL PROTEIN L30"/>
    <property type="match status" value="1"/>
</dbReference>
<dbReference type="Pfam" id="PF00327">
    <property type="entry name" value="Ribosomal_L30"/>
    <property type="match status" value="1"/>
</dbReference>
<dbReference type="PIRSF" id="PIRSF002211">
    <property type="entry name" value="Ribosomal_L30_bac-type"/>
    <property type="match status" value="1"/>
</dbReference>
<dbReference type="SUPFAM" id="SSF55129">
    <property type="entry name" value="Ribosomal protein L30p/L7e"/>
    <property type="match status" value="1"/>
</dbReference>
<accession>A1SNK0</accession>
<protein>
    <recommendedName>
        <fullName evidence="1">Large ribosomal subunit protein uL30</fullName>
    </recommendedName>
    <alternativeName>
        <fullName evidence="2">50S ribosomal protein L30</fullName>
    </alternativeName>
</protein>
<reference key="1">
    <citation type="submission" date="2006-12" db="EMBL/GenBank/DDBJ databases">
        <title>Complete sequence of chromosome 1 of Nocardioides sp. JS614.</title>
        <authorList>
            <person name="Copeland A."/>
            <person name="Lucas S."/>
            <person name="Lapidus A."/>
            <person name="Barry K."/>
            <person name="Detter J.C."/>
            <person name="Glavina del Rio T."/>
            <person name="Hammon N."/>
            <person name="Israni S."/>
            <person name="Dalin E."/>
            <person name="Tice H."/>
            <person name="Pitluck S."/>
            <person name="Thompson L.S."/>
            <person name="Brettin T."/>
            <person name="Bruce D."/>
            <person name="Han C."/>
            <person name="Tapia R."/>
            <person name="Schmutz J."/>
            <person name="Larimer F."/>
            <person name="Land M."/>
            <person name="Hauser L."/>
            <person name="Kyrpides N."/>
            <person name="Kim E."/>
            <person name="Mattes T."/>
            <person name="Gossett J."/>
            <person name="Richardson P."/>
        </authorList>
    </citation>
    <scope>NUCLEOTIDE SEQUENCE [LARGE SCALE GENOMIC DNA]</scope>
    <source>
        <strain>ATCC BAA-499 / JS614</strain>
    </source>
</reference>
<proteinExistence type="inferred from homology"/>
<evidence type="ECO:0000255" key="1">
    <source>
        <dbReference type="HAMAP-Rule" id="MF_01371"/>
    </source>
</evidence>
<evidence type="ECO:0000305" key="2"/>
<organism>
    <name type="scientific">Nocardioides sp. (strain ATCC BAA-499 / JS614)</name>
    <dbReference type="NCBI Taxonomy" id="196162"/>
    <lineage>
        <taxon>Bacteria</taxon>
        <taxon>Bacillati</taxon>
        <taxon>Actinomycetota</taxon>
        <taxon>Actinomycetes</taxon>
        <taxon>Propionibacteriales</taxon>
        <taxon>Nocardioidaceae</taxon>
        <taxon>Nocardioides</taxon>
    </lineage>
</organism>
<name>RL30_NOCSJ</name>
<comment type="subunit">
    <text evidence="1">Part of the 50S ribosomal subunit.</text>
</comment>
<comment type="similarity">
    <text evidence="1">Belongs to the universal ribosomal protein uL30 family.</text>
</comment>
<gene>
    <name evidence="1" type="primary">rpmD</name>
    <name type="ordered locus">Noca_3887</name>
</gene>
<sequence length="60" mass="6794">MAQLKVQQKKGVVGIKANQRETLRTLGLKRIGDVVVKEDRPEIRGMVNTVRHLVTVEEVE</sequence>
<feature type="chain" id="PRO_1000056082" description="Large ribosomal subunit protein uL30">
    <location>
        <begin position="1"/>
        <end position="60"/>
    </location>
</feature>
<keyword id="KW-1185">Reference proteome</keyword>
<keyword id="KW-0687">Ribonucleoprotein</keyword>
<keyword id="KW-0689">Ribosomal protein</keyword>